<name>PYRF_XANOR</name>
<accession>Q5H6B9</accession>
<gene>
    <name evidence="1" type="primary">pyrF</name>
    <name type="ordered locus">XOO0247</name>
</gene>
<protein>
    <recommendedName>
        <fullName evidence="1">Orotidine 5'-phosphate decarboxylase</fullName>
        <ecNumber evidence="1">4.1.1.23</ecNumber>
    </recommendedName>
    <alternativeName>
        <fullName evidence="1">OMP decarboxylase</fullName>
        <shortName evidence="1">OMPDCase</shortName>
        <shortName evidence="1">OMPdecase</shortName>
    </alternativeName>
</protein>
<organism>
    <name type="scientific">Xanthomonas oryzae pv. oryzae (strain KACC10331 / KXO85)</name>
    <dbReference type="NCBI Taxonomy" id="291331"/>
    <lineage>
        <taxon>Bacteria</taxon>
        <taxon>Pseudomonadati</taxon>
        <taxon>Pseudomonadota</taxon>
        <taxon>Gammaproteobacteria</taxon>
        <taxon>Lysobacterales</taxon>
        <taxon>Lysobacteraceae</taxon>
        <taxon>Xanthomonas</taxon>
    </lineage>
</organism>
<comment type="function">
    <text evidence="1">Catalyzes the decarboxylation of orotidine 5'-monophosphate (OMP) to uridine 5'-monophosphate (UMP).</text>
</comment>
<comment type="catalytic activity">
    <reaction evidence="1">
        <text>orotidine 5'-phosphate + H(+) = UMP + CO2</text>
        <dbReference type="Rhea" id="RHEA:11596"/>
        <dbReference type="ChEBI" id="CHEBI:15378"/>
        <dbReference type="ChEBI" id="CHEBI:16526"/>
        <dbReference type="ChEBI" id="CHEBI:57538"/>
        <dbReference type="ChEBI" id="CHEBI:57865"/>
        <dbReference type="EC" id="4.1.1.23"/>
    </reaction>
</comment>
<comment type="pathway">
    <text evidence="1">Pyrimidine metabolism; UMP biosynthesis via de novo pathway; UMP from orotate: step 2/2.</text>
</comment>
<comment type="subunit">
    <text evidence="1">Homodimer.</text>
</comment>
<comment type="similarity">
    <text evidence="1">Belongs to the OMP decarboxylase family. Type 1 subfamily.</text>
</comment>
<sequence length="243" mass="25502">MSRAPLPLAAHERLIFALDVPSHDEAIAWVDRLGDSVAFYKIGMELLASGEYFHVLDALAKRDKRVFVDLKFFDIPATVAGTIRRLAQWPVSYCTVHGWHAGMLQAAADANHGAMRLLAVTVLTSMGRPDLAAMGIDREPVDVVVERALAAEAAGIDGVIASGQEAGPIRRATGPAFSIVCPGIRPGGPVADDQQRIVGVAQAFTDGADAIVVGRPIRLAADPAAAAAAIQAEILAAVGQDRS</sequence>
<feature type="chain" id="PRO_0000241932" description="Orotidine 5'-phosphate decarboxylase">
    <location>
        <begin position="1"/>
        <end position="243"/>
    </location>
</feature>
<feature type="active site" description="Proton donor" evidence="1">
    <location>
        <position position="71"/>
    </location>
</feature>
<feature type="binding site" evidence="1">
    <location>
        <position position="19"/>
    </location>
    <ligand>
        <name>substrate</name>
    </ligand>
</feature>
<feature type="binding site" evidence="1">
    <location>
        <position position="41"/>
    </location>
    <ligand>
        <name>substrate</name>
    </ligand>
</feature>
<feature type="binding site" evidence="1">
    <location>
        <begin position="69"/>
        <end position="78"/>
    </location>
    <ligand>
        <name>substrate</name>
    </ligand>
</feature>
<feature type="binding site" evidence="1">
    <location>
        <position position="124"/>
    </location>
    <ligand>
        <name>substrate</name>
    </ligand>
</feature>
<feature type="binding site" evidence="1">
    <location>
        <position position="185"/>
    </location>
    <ligand>
        <name>substrate</name>
    </ligand>
</feature>
<feature type="binding site" evidence="1">
    <location>
        <position position="194"/>
    </location>
    <ligand>
        <name>substrate</name>
    </ligand>
</feature>
<feature type="binding site" evidence="1">
    <location>
        <position position="214"/>
    </location>
    <ligand>
        <name>substrate</name>
    </ligand>
</feature>
<feature type="binding site" evidence="1">
    <location>
        <position position="215"/>
    </location>
    <ligand>
        <name>substrate</name>
    </ligand>
</feature>
<evidence type="ECO:0000255" key="1">
    <source>
        <dbReference type="HAMAP-Rule" id="MF_01200"/>
    </source>
</evidence>
<reference key="1">
    <citation type="journal article" date="2005" name="Nucleic Acids Res.">
        <title>The genome sequence of Xanthomonas oryzae pathovar oryzae KACC10331, the bacterial blight pathogen of rice.</title>
        <authorList>
            <person name="Lee B.-M."/>
            <person name="Park Y.-J."/>
            <person name="Park D.-S."/>
            <person name="Kang H.-W."/>
            <person name="Kim J.-G."/>
            <person name="Song E.-S."/>
            <person name="Park I.-C."/>
            <person name="Yoon U.-H."/>
            <person name="Hahn J.-H."/>
            <person name="Koo B.-S."/>
            <person name="Lee G.-B."/>
            <person name="Kim H."/>
            <person name="Park H.-S."/>
            <person name="Yoon K.-O."/>
            <person name="Kim J.-H."/>
            <person name="Jung C.-H."/>
            <person name="Koh N.-H."/>
            <person name="Seo J.-S."/>
            <person name="Go S.-J."/>
        </authorList>
    </citation>
    <scope>NUCLEOTIDE SEQUENCE [LARGE SCALE GENOMIC DNA]</scope>
    <source>
        <strain>KACC10331 / KXO85</strain>
    </source>
</reference>
<dbReference type="EC" id="4.1.1.23" evidence="1"/>
<dbReference type="EMBL" id="AE013598">
    <property type="protein sequence ID" value="AAW73501.1"/>
    <property type="molecule type" value="Genomic_DNA"/>
</dbReference>
<dbReference type="SMR" id="Q5H6B9"/>
<dbReference type="STRING" id="291331.XOO0247"/>
<dbReference type="KEGG" id="xoo:XOO0247"/>
<dbReference type="HOGENOM" id="CLU_067069_1_0_6"/>
<dbReference type="UniPathway" id="UPA00070">
    <property type="reaction ID" value="UER00120"/>
</dbReference>
<dbReference type="Proteomes" id="UP000006735">
    <property type="component" value="Chromosome"/>
</dbReference>
<dbReference type="GO" id="GO:0005829">
    <property type="term" value="C:cytosol"/>
    <property type="evidence" value="ECO:0007669"/>
    <property type="project" value="TreeGrafter"/>
</dbReference>
<dbReference type="GO" id="GO:0004590">
    <property type="term" value="F:orotidine-5'-phosphate decarboxylase activity"/>
    <property type="evidence" value="ECO:0007669"/>
    <property type="project" value="UniProtKB-UniRule"/>
</dbReference>
<dbReference type="GO" id="GO:0006207">
    <property type="term" value="P:'de novo' pyrimidine nucleobase biosynthetic process"/>
    <property type="evidence" value="ECO:0007669"/>
    <property type="project" value="InterPro"/>
</dbReference>
<dbReference type="GO" id="GO:0044205">
    <property type="term" value="P:'de novo' UMP biosynthetic process"/>
    <property type="evidence" value="ECO:0007669"/>
    <property type="project" value="UniProtKB-UniRule"/>
</dbReference>
<dbReference type="CDD" id="cd04725">
    <property type="entry name" value="OMP_decarboxylase_like"/>
    <property type="match status" value="1"/>
</dbReference>
<dbReference type="FunFam" id="3.20.20.70:FF:000235">
    <property type="entry name" value="Orotidine 5'-phosphate decarboxylase"/>
    <property type="match status" value="1"/>
</dbReference>
<dbReference type="Gene3D" id="3.20.20.70">
    <property type="entry name" value="Aldolase class I"/>
    <property type="match status" value="1"/>
</dbReference>
<dbReference type="HAMAP" id="MF_01200_B">
    <property type="entry name" value="OMPdecase_type1_B"/>
    <property type="match status" value="1"/>
</dbReference>
<dbReference type="InterPro" id="IPR013785">
    <property type="entry name" value="Aldolase_TIM"/>
</dbReference>
<dbReference type="InterPro" id="IPR014732">
    <property type="entry name" value="OMPdecase"/>
</dbReference>
<dbReference type="InterPro" id="IPR018089">
    <property type="entry name" value="OMPdecase_AS"/>
</dbReference>
<dbReference type="InterPro" id="IPR047596">
    <property type="entry name" value="OMPdecase_bac"/>
</dbReference>
<dbReference type="InterPro" id="IPR001754">
    <property type="entry name" value="OMPdeCOase_dom"/>
</dbReference>
<dbReference type="InterPro" id="IPR011060">
    <property type="entry name" value="RibuloseP-bd_barrel"/>
</dbReference>
<dbReference type="NCBIfam" id="NF001273">
    <property type="entry name" value="PRK00230.1"/>
    <property type="match status" value="1"/>
</dbReference>
<dbReference type="NCBIfam" id="TIGR01740">
    <property type="entry name" value="pyrF"/>
    <property type="match status" value="1"/>
</dbReference>
<dbReference type="PANTHER" id="PTHR32119">
    <property type="entry name" value="OROTIDINE 5'-PHOSPHATE DECARBOXYLASE"/>
    <property type="match status" value="1"/>
</dbReference>
<dbReference type="PANTHER" id="PTHR32119:SF2">
    <property type="entry name" value="OROTIDINE 5'-PHOSPHATE DECARBOXYLASE"/>
    <property type="match status" value="1"/>
</dbReference>
<dbReference type="Pfam" id="PF00215">
    <property type="entry name" value="OMPdecase"/>
    <property type="match status" value="1"/>
</dbReference>
<dbReference type="SMART" id="SM00934">
    <property type="entry name" value="OMPdecase"/>
    <property type="match status" value="1"/>
</dbReference>
<dbReference type="SUPFAM" id="SSF51366">
    <property type="entry name" value="Ribulose-phoshate binding barrel"/>
    <property type="match status" value="1"/>
</dbReference>
<dbReference type="PROSITE" id="PS00156">
    <property type="entry name" value="OMPDECASE"/>
    <property type="match status" value="1"/>
</dbReference>
<keyword id="KW-0210">Decarboxylase</keyword>
<keyword id="KW-0456">Lyase</keyword>
<keyword id="KW-0665">Pyrimidine biosynthesis</keyword>
<keyword id="KW-1185">Reference proteome</keyword>
<proteinExistence type="inferred from homology"/>